<comment type="function">
    <text evidence="1 3">Dermonecrotic toxins cleave the phosphodiester linkage between the phosphate and headgroup of certain phospholipids (sphingolipid and lysolipid substrates), forming an alcohol (often choline) and a cyclic phosphate (By similarity). This toxin acts on sphingomyelin (SM) (By similarity). It may also act on ceramide phosphoethanolamine (CPE), lysophosphatidylcholine (LPC) and lysophosphatidylethanolamine (LPE), but not on lysophosphatidylserine (LPS), and lysophosphatidylglycerol (LPG) (By similarity). It acts by transphosphatidylation, releasing exclusively cyclic phosphate products as second products (By similarity). Induces dermonecrosis, hemolysis, increased vascular permeability, edema, inflammatory response, and platelet aggregation (By similarity).</text>
</comment>
<comment type="catalytic activity">
    <reaction evidence="1">
        <text>an N-(acyl)-sphingosylphosphocholine = an N-(acyl)-sphingosyl-1,3-cyclic phosphate + choline</text>
        <dbReference type="Rhea" id="RHEA:60652"/>
        <dbReference type="ChEBI" id="CHEBI:15354"/>
        <dbReference type="ChEBI" id="CHEBI:64583"/>
        <dbReference type="ChEBI" id="CHEBI:143892"/>
    </reaction>
</comment>
<comment type="catalytic activity">
    <reaction evidence="1">
        <text>an N-(acyl)-sphingosylphosphoethanolamine = an N-(acyl)-sphingosyl-1,3-cyclic phosphate + ethanolamine</text>
        <dbReference type="Rhea" id="RHEA:60648"/>
        <dbReference type="ChEBI" id="CHEBI:57603"/>
        <dbReference type="ChEBI" id="CHEBI:143891"/>
        <dbReference type="ChEBI" id="CHEBI:143892"/>
    </reaction>
</comment>
<comment type="catalytic activity">
    <reaction evidence="1">
        <text>a 1-acyl-sn-glycero-3-phosphocholine = a 1-acyl-sn-glycero-2,3-cyclic phosphate + choline</text>
        <dbReference type="Rhea" id="RHEA:60700"/>
        <dbReference type="ChEBI" id="CHEBI:15354"/>
        <dbReference type="ChEBI" id="CHEBI:58168"/>
        <dbReference type="ChEBI" id="CHEBI:143947"/>
    </reaction>
</comment>
<comment type="catalytic activity">
    <reaction evidence="1">
        <text>a 1-acyl-sn-glycero-3-phosphoethanolamine = a 1-acyl-sn-glycero-2,3-cyclic phosphate + ethanolamine</text>
        <dbReference type="Rhea" id="RHEA:60704"/>
        <dbReference type="ChEBI" id="CHEBI:57603"/>
        <dbReference type="ChEBI" id="CHEBI:64381"/>
        <dbReference type="ChEBI" id="CHEBI:143947"/>
    </reaction>
</comment>
<comment type="cofactor">
    <cofactor evidence="5">
        <name>Mg(2+)</name>
        <dbReference type="ChEBI" id="CHEBI:18420"/>
    </cofactor>
    <text evidence="5">Binds 1 Mg(2+) ion per subunit.</text>
</comment>
<comment type="subcellular location">
    <subcellularLocation>
        <location evidence="8">Secreted</location>
    </subcellularLocation>
</comment>
<comment type="tissue specificity">
    <text evidence="8">Expressed by the venom gland.</text>
</comment>
<comment type="similarity">
    <text evidence="7">Belongs to the arthropod phospholipase D family. Class II subfamily.</text>
</comment>
<comment type="caution">
    <text evidence="1 2 4">The most common activity assay for dermonecrotic toxins detects enzymatic activity by monitoring choline release from substrate. Liberation of choline from sphingomyelin (SM) or lysophosphatidylcholine (LPC) is commonly assumed to result from substrate hydrolysis, giving either ceramide-1-phosphate (C1P) or lysophosphatidic acid (LPA), respectively, as a second product. However, two studies from Lajoie and colleagues (2013 and 2015) report the observation of exclusive formation of cyclic phosphate products as second products, resulting from intramolecular transphosphatidylation. Cyclic phosphates have vastly different biological properties from their monoester counterparts, and they may be relevant to the pathology of brown spider envenomation.</text>
</comment>
<feature type="chain" id="PRO_0000392752" description="Dermonecrotic toxin LhSicTox-alphaIA2aiv">
    <location>
        <begin position="1" status="less than"/>
        <end position="271"/>
    </location>
</feature>
<feature type="active site" evidence="5">
    <location>
        <position position="3"/>
    </location>
</feature>
<feature type="active site" description="Nucleophile" evidence="5">
    <location>
        <position position="39"/>
    </location>
</feature>
<feature type="binding site" evidence="5">
    <location>
        <position position="23"/>
    </location>
    <ligand>
        <name>Mg(2+)</name>
        <dbReference type="ChEBI" id="CHEBI:18420"/>
    </ligand>
</feature>
<feature type="binding site" evidence="5">
    <location>
        <position position="25"/>
    </location>
    <ligand>
        <name>Mg(2+)</name>
        <dbReference type="ChEBI" id="CHEBI:18420"/>
    </ligand>
</feature>
<feature type="binding site" evidence="5">
    <location>
        <position position="83"/>
    </location>
    <ligand>
        <name>Mg(2+)</name>
        <dbReference type="ChEBI" id="CHEBI:18420"/>
    </ligand>
</feature>
<feature type="disulfide bond" evidence="3">
    <location>
        <begin position="43"/>
        <end position="49"/>
    </location>
</feature>
<feature type="disulfide bond" evidence="3">
    <location>
        <begin position="45"/>
        <end position="188"/>
    </location>
</feature>
<feature type="non-terminal residue">
    <location>
        <position position="1"/>
    </location>
</feature>
<reference key="1">
    <citation type="journal article" date="2009" name="Mol. Biol. Evol.">
        <title>Molecular evolution, functional variation, and proposed nomenclature of the gene family that includes sphingomyelinase D in sicariid spider venoms.</title>
        <authorList>
            <person name="Binford G.J."/>
            <person name="Bodner M.R."/>
            <person name="Cordes M.H."/>
            <person name="Baldwin K.L."/>
            <person name="Rynerson M.R."/>
            <person name="Burns S.N."/>
            <person name="Zobel-Thropp P.A."/>
        </authorList>
    </citation>
    <scope>NUCLEOTIDE SEQUENCE [MRNA]</scope>
    <scope>NOMENCLATURE</scope>
    <source>
        <tissue>Venom gland</tissue>
    </source>
</reference>
<keyword id="KW-0204">Cytolysis</keyword>
<keyword id="KW-1061">Dermonecrotic toxin</keyword>
<keyword id="KW-1015">Disulfide bond</keyword>
<keyword id="KW-0354">Hemolysis</keyword>
<keyword id="KW-0442">Lipid degradation</keyword>
<keyword id="KW-0443">Lipid metabolism</keyword>
<keyword id="KW-0456">Lyase</keyword>
<keyword id="KW-0460">Magnesium</keyword>
<keyword id="KW-0479">Metal-binding</keyword>
<keyword id="KW-0964">Secreted</keyword>
<keyword id="KW-0800">Toxin</keyword>
<proteinExistence type="evidence at transcript level"/>
<name>A1IA4_LOXHI</name>
<accession>C0JAR0</accession>
<dbReference type="EC" id="4.6.1.-" evidence="4"/>
<dbReference type="EMBL" id="FJ171345">
    <property type="protein sequence ID" value="ACN48841.1"/>
    <property type="molecule type" value="mRNA"/>
</dbReference>
<dbReference type="SMR" id="C0JAR0"/>
<dbReference type="GO" id="GO:0005576">
    <property type="term" value="C:extracellular region"/>
    <property type="evidence" value="ECO:0007669"/>
    <property type="project" value="UniProtKB-SubCell"/>
</dbReference>
<dbReference type="GO" id="GO:0016829">
    <property type="term" value="F:lyase activity"/>
    <property type="evidence" value="ECO:0007669"/>
    <property type="project" value="UniProtKB-KW"/>
</dbReference>
<dbReference type="GO" id="GO:0046872">
    <property type="term" value="F:metal ion binding"/>
    <property type="evidence" value="ECO:0007669"/>
    <property type="project" value="UniProtKB-KW"/>
</dbReference>
<dbReference type="GO" id="GO:0008081">
    <property type="term" value="F:phosphoric diester hydrolase activity"/>
    <property type="evidence" value="ECO:0007669"/>
    <property type="project" value="InterPro"/>
</dbReference>
<dbReference type="GO" id="GO:0090729">
    <property type="term" value="F:toxin activity"/>
    <property type="evidence" value="ECO:0007669"/>
    <property type="project" value="UniProtKB-KW"/>
</dbReference>
<dbReference type="GO" id="GO:0031640">
    <property type="term" value="P:killing of cells of another organism"/>
    <property type="evidence" value="ECO:0007669"/>
    <property type="project" value="UniProtKB-KW"/>
</dbReference>
<dbReference type="GO" id="GO:0016042">
    <property type="term" value="P:lipid catabolic process"/>
    <property type="evidence" value="ECO:0007669"/>
    <property type="project" value="UniProtKB-KW"/>
</dbReference>
<dbReference type="CDD" id="cd08576">
    <property type="entry name" value="GDPD_like_SMaseD_PLD"/>
    <property type="match status" value="1"/>
</dbReference>
<dbReference type="Gene3D" id="3.20.20.190">
    <property type="entry name" value="Phosphatidylinositol (PI) phosphodiesterase"/>
    <property type="match status" value="1"/>
</dbReference>
<dbReference type="InterPro" id="IPR017946">
    <property type="entry name" value="PLC-like_Pdiesterase_TIM-brl"/>
</dbReference>
<dbReference type="Pfam" id="PF13653">
    <property type="entry name" value="GDPD_2"/>
    <property type="match status" value="1"/>
</dbReference>
<dbReference type="SUPFAM" id="SSF51695">
    <property type="entry name" value="PLC-like phosphodiesterases"/>
    <property type="match status" value="1"/>
</dbReference>
<sequence length="271" mass="30093">MGHMVNAIYQIDEFVNLGANSIETDVSFDDNANPEYTHHGIPCDCGRSCLKWKNYNDFLKGLRSATTPGNSKYQSKLILVVFDLKTGSLYDNQASEAGKKLAKNLLKHYWNNGNNGGRAYIVLSIPDLNHYPLIKGFTDTLKQEGHPELLEKVGYDFSGNDAVGDVAKAYKKAGVSGHVWQSDGITNCLLRGLTRVKEAVANRDSGNGYINKVYYWTVDKRATTRDALDAGVDGVMTNYPDVIADVMSEAAYKNKVRLATYEDSPWVTFKK</sequence>
<organism>
    <name type="scientific">Loxosceles hirsuta</name>
    <name type="common">Recluse spider</name>
    <dbReference type="NCBI Taxonomy" id="571525"/>
    <lineage>
        <taxon>Eukaryota</taxon>
        <taxon>Metazoa</taxon>
        <taxon>Ecdysozoa</taxon>
        <taxon>Arthropoda</taxon>
        <taxon>Chelicerata</taxon>
        <taxon>Arachnida</taxon>
        <taxon>Araneae</taxon>
        <taxon>Araneomorphae</taxon>
        <taxon>Haplogynae</taxon>
        <taxon>Scytodoidea</taxon>
        <taxon>Sicariidae</taxon>
        <taxon>Loxosceles</taxon>
    </lineage>
</organism>
<evidence type="ECO:0000250" key="1">
    <source>
        <dbReference type="UniProtKB" id="A0A0D4WTV1"/>
    </source>
</evidence>
<evidence type="ECO:0000250" key="2">
    <source>
        <dbReference type="UniProtKB" id="A0A0D4WV12"/>
    </source>
</evidence>
<evidence type="ECO:0000250" key="3">
    <source>
        <dbReference type="UniProtKB" id="P0CE80"/>
    </source>
</evidence>
<evidence type="ECO:0000250" key="4">
    <source>
        <dbReference type="UniProtKB" id="Q4ZFU2"/>
    </source>
</evidence>
<evidence type="ECO:0000250" key="5">
    <source>
        <dbReference type="UniProtKB" id="Q8I914"/>
    </source>
</evidence>
<evidence type="ECO:0000303" key="6">
    <source>
    </source>
</evidence>
<evidence type="ECO:0000305" key="7"/>
<evidence type="ECO:0000305" key="8">
    <source>
    </source>
</evidence>
<protein>
    <recommendedName>
        <fullName evidence="6">Dermonecrotic toxin LhSicTox-alphaIA2aiv</fullName>
        <ecNumber evidence="4">4.6.1.-</ecNumber>
    </recommendedName>
    <alternativeName>
        <fullName>Phospholipase D</fullName>
        <shortName>PLD</shortName>
    </alternativeName>
    <alternativeName>
        <fullName>Sphingomyelin phosphodiesterase D</fullName>
        <shortName>SMD</shortName>
        <shortName>SMase D</shortName>
        <shortName>Sphingomyelinase D</shortName>
    </alternativeName>
</protein>